<organism>
    <name type="scientific">Methanogenium organophilum</name>
    <dbReference type="NCBI Taxonomy" id="2199"/>
    <lineage>
        <taxon>Archaea</taxon>
        <taxon>Methanobacteriati</taxon>
        <taxon>Methanobacteriota</taxon>
        <taxon>Stenosarchaea group</taxon>
        <taxon>Methanomicrobia</taxon>
        <taxon>Methanomicrobiales</taxon>
        <taxon>Methanomicrobiaceae</taxon>
        <taxon>Methanogenium</taxon>
    </lineage>
</organism>
<reference key="1">
    <citation type="journal article" date="1997" name="Arch. Microbiol.">
        <title>Function of coenzyme F420-dependent NADP reductase in methanogenic archaea containing an NADP-dependent alcohol dehydrogenase.</title>
        <authorList>
            <person name="Berk H."/>
            <person name="Thauer R.K."/>
        </authorList>
    </citation>
    <scope>PROTEIN SEQUENCE</scope>
    <scope>FUNCTION</scope>
    <scope>CATALYTIC ACTIVITY</scope>
    <scope>BIOPHYSICOCHEMICAL PROPERTIES</scope>
    <scope>SUBUNIT</scope>
    <source>
        <strain>ATCC BAA-914 / DSM 3596 / OCM 72</strain>
    </source>
</reference>
<evidence type="ECO:0000250" key="1">
    <source>
        <dbReference type="UniProtKB" id="O29370"/>
    </source>
</evidence>
<evidence type="ECO:0000269" key="2">
    <source>
    </source>
</evidence>
<evidence type="ECO:0000303" key="3">
    <source>
    </source>
</evidence>
<evidence type="ECO:0000305" key="4"/>
<evidence type="ECO:0000305" key="5">
    <source>
    </source>
</evidence>
<comment type="function">
    <text evidence="2">Catalyzes the reduction of NADP(+) with F420H(2) via hydride transfer, and the reverse reaction, i.e. the reduction of F420 with NADPH. In M.organophilum, an alcohol-fermenting methanogen containing an NADP-dependent alcohol dehydrogenase, is probably involved in the regeneration of F420H(2) required for CO(2) reduction to methane. Thus, during growth on alcohol and CO(2), the F420-dependent NADP reductase probably has the function of coupling the NADP-dependent oxidation of the alcohol to the aldehyde with the F420-dependent reduction of CO(2) to methane.</text>
</comment>
<comment type="catalytic activity">
    <reaction evidence="2">
        <text>reduced coenzyme F420-(gamma-L-Glu)(n) + NADP(+) = oxidized coenzyme F420-(gamma-L-Glu)(n) + NADPH + 2 H(+)</text>
        <dbReference type="Rhea" id="RHEA:31363"/>
        <dbReference type="Rhea" id="RHEA-COMP:12939"/>
        <dbReference type="Rhea" id="RHEA-COMP:14378"/>
        <dbReference type="ChEBI" id="CHEBI:15378"/>
        <dbReference type="ChEBI" id="CHEBI:57783"/>
        <dbReference type="ChEBI" id="CHEBI:58349"/>
        <dbReference type="ChEBI" id="CHEBI:133980"/>
        <dbReference type="ChEBI" id="CHEBI:139511"/>
        <dbReference type="EC" id="1.5.1.40"/>
    </reaction>
</comment>
<comment type="biophysicochemical properties">
    <kinetics>
        <KM evidence="2">0.1 mM for F420 (at pH 6.0)</KM>
        <KM evidence="2">0.05 mM for NADPH (at pH 6.0)</KM>
        <KM evidence="2">0.04 mM for F420H(2) (at pH 8.0)</KM>
        <KM evidence="2">0.01 mM for NADP(+) (at pH 8.0)</KM>
        <Vmax evidence="2">2800.0 umol/min/mg enzyme for F420 reduction with NADPH</Vmax>
        <Vmax evidence="2">2000.0 umol/min/mg enzyme for NADP(+) reduction with F420H(2)</Vmax>
    </kinetics>
    <phDependence>
        <text evidence="2">Optimum pH is 5.5 for F420 reduction with NADPH, and 9.2 for NADP(+) reduction with F420H(2).</text>
    </phDependence>
    <temperatureDependence>
        <text evidence="2">Optimum temperature is 34 degrees Celsius.</text>
    </temperatureDependence>
</comment>
<comment type="subunit">
    <text evidence="5">Homotetramer.</text>
</comment>
<comment type="similarity">
    <text evidence="4">Belongs to the F420-dependent NADP reductase family.</text>
</comment>
<accession>P80951</accession>
<protein>
    <recommendedName>
        <fullName evidence="3">F420-dependent NADP reductase</fullName>
        <ecNumber evidence="2">1.5.1.40</ecNumber>
    </recommendedName>
    <alternativeName>
        <fullName>F420H2:NADP oxidoreductase</fullName>
    </alternativeName>
</protein>
<gene>
    <name type="primary">fno</name>
</gene>
<sequence>MKVGIMGGTGNIGEGLARRIXIGGKYDVMIKGRDKA</sequence>
<name>FNO_METOG</name>
<proteinExistence type="evidence at protein level"/>
<feature type="chain" id="PRO_0000087153" description="F420-dependent NADP reductase">
    <location>
        <begin position="1"/>
        <end position="36" status="greater than"/>
    </location>
</feature>
<feature type="binding site" evidence="1">
    <location>
        <begin position="9"/>
        <end position="12"/>
    </location>
    <ligand>
        <name>NADP(+)</name>
        <dbReference type="ChEBI" id="CHEBI:58349"/>
    </ligand>
</feature>
<feature type="unsure residue">
    <location>
        <begin position="32"/>
        <end position="36"/>
    </location>
</feature>
<feature type="non-terminal residue">
    <location>
        <position position="36"/>
    </location>
</feature>
<keyword id="KW-0903">Direct protein sequencing</keyword>
<keyword id="KW-0521">NADP</keyword>
<keyword id="KW-0560">Oxidoreductase</keyword>
<dbReference type="EC" id="1.5.1.40" evidence="2"/>
<dbReference type="BRENDA" id="1.5.1.40">
    <property type="organism ID" value="13505"/>
</dbReference>
<dbReference type="GO" id="GO:0102261">
    <property type="term" value="F:8-hydroxy-5-deazaflavin:NADPH oxidoreductase activity"/>
    <property type="evidence" value="ECO:0007669"/>
    <property type="project" value="UniProtKB-EC"/>
</dbReference>
<dbReference type="Gene3D" id="3.40.50.720">
    <property type="entry name" value="NAD(P)-binding Rossmann-like Domain"/>
    <property type="match status" value="1"/>
</dbReference>
<dbReference type="InterPro" id="IPR036291">
    <property type="entry name" value="NAD(P)-bd_dom_sf"/>
</dbReference>
<dbReference type="SUPFAM" id="SSF51735">
    <property type="entry name" value="NAD(P)-binding Rossmann-fold domains"/>
    <property type="match status" value="1"/>
</dbReference>